<protein>
    <recommendedName>
        <fullName evidence="1">Phosphatidylserine decarboxylase proenzyme</fullName>
        <ecNumber evidence="1">4.1.1.65</ecNumber>
    </recommendedName>
    <component>
        <recommendedName>
            <fullName evidence="1">Phosphatidylserine decarboxylase alpha chain</fullName>
        </recommendedName>
    </component>
    <component>
        <recommendedName>
            <fullName evidence="1">Phosphatidylserine decarboxylase beta chain</fullName>
        </recommendedName>
    </component>
</protein>
<feature type="chain" id="PRO_1000131354" description="Phosphatidylserine decarboxylase beta chain" evidence="1">
    <location>
        <begin position="1"/>
        <end position="243"/>
    </location>
</feature>
<feature type="chain" id="PRO_1000131355" description="Phosphatidylserine decarboxylase alpha chain" evidence="1">
    <location>
        <begin position="244"/>
        <end position="282"/>
    </location>
</feature>
<feature type="active site" description="Charge relay system; for autoendoproteolytic cleavage activity" evidence="1">
    <location>
        <position position="85"/>
    </location>
</feature>
<feature type="active site" description="Charge relay system; for autoendoproteolytic cleavage activity" evidence="1">
    <location>
        <position position="142"/>
    </location>
</feature>
<feature type="active site" description="Charge relay system; for autoendoproteolytic cleavage activity" evidence="1">
    <location>
        <position position="244"/>
    </location>
</feature>
<feature type="active site" description="Schiff-base intermediate with substrate; via pyruvic acid; for decarboxylase activity" evidence="1">
    <location>
        <position position="244"/>
    </location>
</feature>
<feature type="site" description="Cleavage (non-hydrolytic); by autocatalysis" evidence="1">
    <location>
        <begin position="243"/>
        <end position="244"/>
    </location>
</feature>
<feature type="modified residue" description="Pyruvic acid (Ser); by autocatalysis" evidence="1">
    <location>
        <position position="244"/>
    </location>
</feature>
<keyword id="KW-1003">Cell membrane</keyword>
<keyword id="KW-0210">Decarboxylase</keyword>
<keyword id="KW-0444">Lipid biosynthesis</keyword>
<keyword id="KW-0443">Lipid metabolism</keyword>
<keyword id="KW-0456">Lyase</keyword>
<keyword id="KW-0472">Membrane</keyword>
<keyword id="KW-0594">Phospholipid biosynthesis</keyword>
<keyword id="KW-1208">Phospholipid metabolism</keyword>
<keyword id="KW-0670">Pyruvate</keyword>
<keyword id="KW-0865">Zymogen</keyword>
<organism>
    <name type="scientific">Coxiella burnetii (strain CbuG_Q212)</name>
    <name type="common">Coxiella burnetii (strain Q212)</name>
    <dbReference type="NCBI Taxonomy" id="434923"/>
    <lineage>
        <taxon>Bacteria</taxon>
        <taxon>Pseudomonadati</taxon>
        <taxon>Pseudomonadota</taxon>
        <taxon>Gammaproteobacteria</taxon>
        <taxon>Legionellales</taxon>
        <taxon>Coxiellaceae</taxon>
        <taxon>Coxiella</taxon>
    </lineage>
</organism>
<name>PSD_COXB2</name>
<gene>
    <name evidence="1" type="primary">psd</name>
    <name type="ordered locus">CbuG_0199</name>
</gene>
<reference key="1">
    <citation type="journal article" date="2009" name="Infect. Immun.">
        <title>Comparative genomics reveal extensive transposon-mediated genomic plasticity and diversity among potential effector proteins within the genus Coxiella.</title>
        <authorList>
            <person name="Beare P.A."/>
            <person name="Unsworth N."/>
            <person name="Andoh M."/>
            <person name="Voth D.E."/>
            <person name="Omsland A."/>
            <person name="Gilk S.D."/>
            <person name="Williams K.P."/>
            <person name="Sobral B.W."/>
            <person name="Kupko J.J. III"/>
            <person name="Porcella S.F."/>
            <person name="Samuel J.E."/>
            <person name="Heinzen R.A."/>
        </authorList>
    </citation>
    <scope>NUCLEOTIDE SEQUENCE [LARGE SCALE GENOMIC DNA]</scope>
    <source>
        <strain>CbuG_Q212</strain>
    </source>
</reference>
<dbReference type="EC" id="4.1.1.65" evidence="1"/>
<dbReference type="EMBL" id="CP001019">
    <property type="protein sequence ID" value="ACJ17646.1"/>
    <property type="molecule type" value="Genomic_DNA"/>
</dbReference>
<dbReference type="SMR" id="B6J316"/>
<dbReference type="KEGG" id="cbg:CbuG_0199"/>
<dbReference type="HOGENOM" id="CLU_029061_4_1_6"/>
<dbReference type="UniPathway" id="UPA00558">
    <property type="reaction ID" value="UER00616"/>
</dbReference>
<dbReference type="GO" id="GO:0005886">
    <property type="term" value="C:plasma membrane"/>
    <property type="evidence" value="ECO:0007669"/>
    <property type="project" value="UniProtKB-SubCell"/>
</dbReference>
<dbReference type="GO" id="GO:0004609">
    <property type="term" value="F:phosphatidylserine decarboxylase activity"/>
    <property type="evidence" value="ECO:0007669"/>
    <property type="project" value="UniProtKB-UniRule"/>
</dbReference>
<dbReference type="GO" id="GO:0006646">
    <property type="term" value="P:phosphatidylethanolamine biosynthetic process"/>
    <property type="evidence" value="ECO:0007669"/>
    <property type="project" value="UniProtKB-UniRule"/>
</dbReference>
<dbReference type="HAMAP" id="MF_00662">
    <property type="entry name" value="PS_decarb_PSD_B_type1"/>
    <property type="match status" value="1"/>
</dbReference>
<dbReference type="InterPro" id="IPR003817">
    <property type="entry name" value="PS_Dcarbxylase"/>
</dbReference>
<dbReference type="InterPro" id="IPR033177">
    <property type="entry name" value="PSD-B"/>
</dbReference>
<dbReference type="InterPro" id="IPR033178">
    <property type="entry name" value="PSD_type1_pro"/>
</dbReference>
<dbReference type="NCBIfam" id="TIGR00163">
    <property type="entry name" value="PS_decarb"/>
    <property type="match status" value="1"/>
</dbReference>
<dbReference type="PANTHER" id="PTHR10067">
    <property type="entry name" value="PHOSPHATIDYLSERINE DECARBOXYLASE"/>
    <property type="match status" value="1"/>
</dbReference>
<dbReference type="PANTHER" id="PTHR10067:SF6">
    <property type="entry name" value="PHOSPHATIDYLSERINE DECARBOXYLASE PROENZYME, MITOCHONDRIAL"/>
    <property type="match status" value="1"/>
</dbReference>
<dbReference type="Pfam" id="PF02666">
    <property type="entry name" value="PS_Dcarbxylase"/>
    <property type="match status" value="1"/>
</dbReference>
<proteinExistence type="inferred from homology"/>
<comment type="function">
    <text evidence="1">Catalyzes the formation of phosphatidylethanolamine (PtdEtn) from phosphatidylserine (PtdSer).</text>
</comment>
<comment type="catalytic activity">
    <reaction evidence="1">
        <text>a 1,2-diacyl-sn-glycero-3-phospho-L-serine + H(+) = a 1,2-diacyl-sn-glycero-3-phosphoethanolamine + CO2</text>
        <dbReference type="Rhea" id="RHEA:20828"/>
        <dbReference type="ChEBI" id="CHEBI:15378"/>
        <dbReference type="ChEBI" id="CHEBI:16526"/>
        <dbReference type="ChEBI" id="CHEBI:57262"/>
        <dbReference type="ChEBI" id="CHEBI:64612"/>
        <dbReference type="EC" id="4.1.1.65"/>
    </reaction>
</comment>
<comment type="cofactor">
    <cofactor evidence="1">
        <name>pyruvate</name>
        <dbReference type="ChEBI" id="CHEBI:15361"/>
    </cofactor>
    <text evidence="1">Binds 1 pyruvoyl group covalently per subunit.</text>
</comment>
<comment type="pathway">
    <text evidence="1">Phospholipid metabolism; phosphatidylethanolamine biosynthesis; phosphatidylethanolamine from CDP-diacylglycerol: step 2/2.</text>
</comment>
<comment type="subunit">
    <text evidence="1">Heterodimer of a large membrane-associated beta subunit and a small pyruvoyl-containing alpha subunit.</text>
</comment>
<comment type="subcellular location">
    <subcellularLocation>
        <location evidence="1">Cell membrane</location>
        <topology evidence="1">Peripheral membrane protein</topology>
    </subcellularLocation>
</comment>
<comment type="PTM">
    <text evidence="1">Is synthesized initially as an inactive proenzyme. Formation of the active enzyme involves a self-maturation process in which the active site pyruvoyl group is generated from an internal serine residue via an autocatalytic post-translational modification. Two non-identical subunits are generated from the proenzyme in this reaction, and the pyruvate is formed at the N-terminus of the alpha chain, which is derived from the carboxyl end of the proenzyme. The autoendoproteolytic cleavage occurs by a canonical serine protease mechanism, in which the side chain hydroxyl group of the serine supplies its oxygen atom to form the C-terminus of the beta chain, while the remainder of the serine residue undergoes an oxidative deamination to produce ammonia and the pyruvoyl prosthetic group on the alpha chain. During this reaction, the Ser that is part of the protease active site of the proenzyme becomes the pyruvoyl prosthetic group, which constitutes an essential element of the active site of the mature decarboxylase.</text>
</comment>
<comment type="similarity">
    <text evidence="1">Belongs to the phosphatidylserine decarboxylase family. PSD-B subfamily. Prokaryotic type I sub-subfamily.</text>
</comment>
<evidence type="ECO:0000255" key="1">
    <source>
        <dbReference type="HAMAP-Rule" id="MF_00662"/>
    </source>
</evidence>
<accession>B6J316</accession>
<sequence>MTKLHKYLPQRTLSKIVGWLATREWGLLTQWAIRLFIRHYGINMQEAQYPDIGHYPSFNAFFTRYLKRELRPVVEEPRAIASPVDGIISEMGQIKGENLIQAKNHHYTITALLGEDPSRASQFLDGDFFTAYLAPKNYHRIHMPLDGRLIEMIHIPGKLFSVNPASVQTVPRLFARNERAVCLFETENGLMAVILVGAMLVGSINTVWHGTVVPTAEGIAVHNYREKNIKFKRGEEIGHFKMGSTVILLFPKNTIQWNPNCQPKGTICYGENIGTVSLIEVA</sequence>